<proteinExistence type="inferred from homology"/>
<protein>
    <recommendedName>
        <fullName evidence="1">Small ribosomal subunit protein uS17</fullName>
    </recommendedName>
    <alternativeName>
        <fullName evidence="2">30S ribosomal protein S17</fullName>
    </alternativeName>
</protein>
<name>RS17_BACCQ</name>
<comment type="function">
    <text evidence="1">One of the primary rRNA binding proteins, it binds specifically to the 5'-end of 16S ribosomal RNA.</text>
</comment>
<comment type="subunit">
    <text evidence="1">Part of the 30S ribosomal subunit.</text>
</comment>
<comment type="similarity">
    <text evidence="1">Belongs to the universal ribosomal protein uS17 family.</text>
</comment>
<dbReference type="EMBL" id="CP000227">
    <property type="protein sequence ID" value="ACM10647.1"/>
    <property type="molecule type" value="Genomic_DNA"/>
</dbReference>
<dbReference type="SMR" id="B9IZK3"/>
<dbReference type="KEGG" id="bcq:BCQ_0132"/>
<dbReference type="HOGENOM" id="CLU_073626_1_0_9"/>
<dbReference type="Proteomes" id="UP000000441">
    <property type="component" value="Chromosome"/>
</dbReference>
<dbReference type="GO" id="GO:0022627">
    <property type="term" value="C:cytosolic small ribosomal subunit"/>
    <property type="evidence" value="ECO:0007669"/>
    <property type="project" value="TreeGrafter"/>
</dbReference>
<dbReference type="GO" id="GO:0019843">
    <property type="term" value="F:rRNA binding"/>
    <property type="evidence" value="ECO:0007669"/>
    <property type="project" value="UniProtKB-UniRule"/>
</dbReference>
<dbReference type="GO" id="GO:0003735">
    <property type="term" value="F:structural constituent of ribosome"/>
    <property type="evidence" value="ECO:0007669"/>
    <property type="project" value="InterPro"/>
</dbReference>
<dbReference type="GO" id="GO:0006412">
    <property type="term" value="P:translation"/>
    <property type="evidence" value="ECO:0007669"/>
    <property type="project" value="UniProtKB-UniRule"/>
</dbReference>
<dbReference type="CDD" id="cd00364">
    <property type="entry name" value="Ribosomal_uS17"/>
    <property type="match status" value="1"/>
</dbReference>
<dbReference type="FunFam" id="2.40.50.140:FF:000026">
    <property type="entry name" value="30S ribosomal protein S17"/>
    <property type="match status" value="1"/>
</dbReference>
<dbReference type="Gene3D" id="2.40.50.140">
    <property type="entry name" value="Nucleic acid-binding proteins"/>
    <property type="match status" value="1"/>
</dbReference>
<dbReference type="HAMAP" id="MF_01345_B">
    <property type="entry name" value="Ribosomal_uS17_B"/>
    <property type="match status" value="1"/>
</dbReference>
<dbReference type="InterPro" id="IPR012340">
    <property type="entry name" value="NA-bd_OB-fold"/>
</dbReference>
<dbReference type="InterPro" id="IPR000266">
    <property type="entry name" value="Ribosomal_uS17"/>
</dbReference>
<dbReference type="InterPro" id="IPR019984">
    <property type="entry name" value="Ribosomal_uS17_bact/chlr"/>
</dbReference>
<dbReference type="InterPro" id="IPR019979">
    <property type="entry name" value="Ribosomal_uS17_CS"/>
</dbReference>
<dbReference type="NCBIfam" id="NF004123">
    <property type="entry name" value="PRK05610.1"/>
    <property type="match status" value="1"/>
</dbReference>
<dbReference type="NCBIfam" id="TIGR03635">
    <property type="entry name" value="uS17_bact"/>
    <property type="match status" value="1"/>
</dbReference>
<dbReference type="PANTHER" id="PTHR10744">
    <property type="entry name" value="40S RIBOSOMAL PROTEIN S11 FAMILY MEMBER"/>
    <property type="match status" value="1"/>
</dbReference>
<dbReference type="PANTHER" id="PTHR10744:SF1">
    <property type="entry name" value="SMALL RIBOSOMAL SUBUNIT PROTEIN US17M"/>
    <property type="match status" value="1"/>
</dbReference>
<dbReference type="Pfam" id="PF00366">
    <property type="entry name" value="Ribosomal_S17"/>
    <property type="match status" value="1"/>
</dbReference>
<dbReference type="PRINTS" id="PR00973">
    <property type="entry name" value="RIBOSOMALS17"/>
</dbReference>
<dbReference type="SUPFAM" id="SSF50249">
    <property type="entry name" value="Nucleic acid-binding proteins"/>
    <property type="match status" value="1"/>
</dbReference>
<dbReference type="PROSITE" id="PS00056">
    <property type="entry name" value="RIBOSOMAL_S17"/>
    <property type="match status" value="1"/>
</dbReference>
<gene>
    <name evidence="1" type="primary">rpsQ</name>
    <name type="ordered locus">BCQ_0132</name>
</gene>
<sequence>MSERNQRKVYTGRVVSDKMDKTITVLVETYKTHSLYGKRVKYSKKYKAHDEQNQAKLGDIVKIMETRPLSATKRFRLVEIVEEAVII</sequence>
<evidence type="ECO:0000255" key="1">
    <source>
        <dbReference type="HAMAP-Rule" id="MF_01345"/>
    </source>
</evidence>
<evidence type="ECO:0000305" key="2"/>
<accession>B9IZK3</accession>
<keyword id="KW-0687">Ribonucleoprotein</keyword>
<keyword id="KW-0689">Ribosomal protein</keyword>
<keyword id="KW-0694">RNA-binding</keyword>
<keyword id="KW-0699">rRNA-binding</keyword>
<feature type="chain" id="PRO_1000166460" description="Small ribosomal subunit protein uS17">
    <location>
        <begin position="1"/>
        <end position="87"/>
    </location>
</feature>
<organism>
    <name type="scientific">Bacillus cereus (strain Q1)</name>
    <dbReference type="NCBI Taxonomy" id="361100"/>
    <lineage>
        <taxon>Bacteria</taxon>
        <taxon>Bacillati</taxon>
        <taxon>Bacillota</taxon>
        <taxon>Bacilli</taxon>
        <taxon>Bacillales</taxon>
        <taxon>Bacillaceae</taxon>
        <taxon>Bacillus</taxon>
        <taxon>Bacillus cereus group</taxon>
    </lineage>
</organism>
<reference key="1">
    <citation type="journal article" date="2009" name="J. Bacteriol.">
        <title>Complete genome sequence of the extremophilic Bacillus cereus strain Q1 with industrial applications.</title>
        <authorList>
            <person name="Xiong Z."/>
            <person name="Jiang Y."/>
            <person name="Qi D."/>
            <person name="Lu H."/>
            <person name="Yang F."/>
            <person name="Yang J."/>
            <person name="Chen L."/>
            <person name="Sun L."/>
            <person name="Xu X."/>
            <person name="Xue Y."/>
            <person name="Zhu Y."/>
            <person name="Jin Q."/>
        </authorList>
    </citation>
    <scope>NUCLEOTIDE SEQUENCE [LARGE SCALE GENOMIC DNA]</scope>
    <source>
        <strain>Q1</strain>
    </source>
</reference>